<dbReference type="EC" id="2.8.1.10" evidence="1"/>
<dbReference type="EMBL" id="CP000284">
    <property type="protein sequence ID" value="ABE50900.1"/>
    <property type="molecule type" value="Genomic_DNA"/>
</dbReference>
<dbReference type="RefSeq" id="WP_011480853.1">
    <property type="nucleotide sequence ID" value="NC_007947.1"/>
</dbReference>
<dbReference type="SMR" id="Q1GXY7"/>
<dbReference type="STRING" id="265072.Mfla_2637"/>
<dbReference type="KEGG" id="mfa:Mfla_2637"/>
<dbReference type="eggNOG" id="COG2022">
    <property type="taxonomic scope" value="Bacteria"/>
</dbReference>
<dbReference type="HOGENOM" id="CLU_062233_1_1_4"/>
<dbReference type="OrthoDB" id="9805935at2"/>
<dbReference type="UniPathway" id="UPA00060"/>
<dbReference type="Proteomes" id="UP000002440">
    <property type="component" value="Chromosome"/>
</dbReference>
<dbReference type="GO" id="GO:0005737">
    <property type="term" value="C:cytoplasm"/>
    <property type="evidence" value="ECO:0007669"/>
    <property type="project" value="UniProtKB-SubCell"/>
</dbReference>
<dbReference type="GO" id="GO:1990107">
    <property type="term" value="F:thiazole synthase activity"/>
    <property type="evidence" value="ECO:0007669"/>
    <property type="project" value="UniProtKB-EC"/>
</dbReference>
<dbReference type="GO" id="GO:0009229">
    <property type="term" value="P:thiamine diphosphate biosynthetic process"/>
    <property type="evidence" value="ECO:0007669"/>
    <property type="project" value="UniProtKB-UniRule"/>
</dbReference>
<dbReference type="CDD" id="cd04728">
    <property type="entry name" value="ThiG"/>
    <property type="match status" value="1"/>
</dbReference>
<dbReference type="Gene3D" id="3.20.20.70">
    <property type="entry name" value="Aldolase class I"/>
    <property type="match status" value="1"/>
</dbReference>
<dbReference type="HAMAP" id="MF_00443">
    <property type="entry name" value="ThiG"/>
    <property type="match status" value="1"/>
</dbReference>
<dbReference type="InterPro" id="IPR013785">
    <property type="entry name" value="Aldolase_TIM"/>
</dbReference>
<dbReference type="InterPro" id="IPR033983">
    <property type="entry name" value="Thiazole_synthase_ThiG"/>
</dbReference>
<dbReference type="InterPro" id="IPR008867">
    <property type="entry name" value="ThiG"/>
</dbReference>
<dbReference type="PANTHER" id="PTHR34266">
    <property type="entry name" value="THIAZOLE SYNTHASE"/>
    <property type="match status" value="1"/>
</dbReference>
<dbReference type="PANTHER" id="PTHR34266:SF2">
    <property type="entry name" value="THIAZOLE SYNTHASE"/>
    <property type="match status" value="1"/>
</dbReference>
<dbReference type="Pfam" id="PF05690">
    <property type="entry name" value="ThiG"/>
    <property type="match status" value="1"/>
</dbReference>
<dbReference type="SUPFAM" id="SSF110399">
    <property type="entry name" value="ThiG-like"/>
    <property type="match status" value="1"/>
</dbReference>
<evidence type="ECO:0000255" key="1">
    <source>
        <dbReference type="HAMAP-Rule" id="MF_00443"/>
    </source>
</evidence>
<name>THIG_METFK</name>
<gene>
    <name evidence="1" type="primary">thiG</name>
    <name type="ordered locus">Mfla_2637</name>
</gene>
<comment type="function">
    <text evidence="1">Catalyzes the rearrangement of 1-deoxy-D-xylulose 5-phosphate (DXP) to produce the thiazole phosphate moiety of thiamine. Sulfur is provided by the thiocarboxylate moiety of the carrier protein ThiS. In vitro, sulfur can be provided by H(2)S.</text>
</comment>
<comment type="catalytic activity">
    <reaction evidence="1">
        <text>[ThiS sulfur-carrier protein]-C-terminal-Gly-aminoethanethioate + 2-iminoacetate + 1-deoxy-D-xylulose 5-phosphate = [ThiS sulfur-carrier protein]-C-terminal Gly-Gly + 2-[(2R,5Z)-2-carboxy-4-methylthiazol-5(2H)-ylidene]ethyl phosphate + 2 H2O + H(+)</text>
        <dbReference type="Rhea" id="RHEA:26297"/>
        <dbReference type="Rhea" id="RHEA-COMP:12909"/>
        <dbReference type="Rhea" id="RHEA-COMP:19908"/>
        <dbReference type="ChEBI" id="CHEBI:15377"/>
        <dbReference type="ChEBI" id="CHEBI:15378"/>
        <dbReference type="ChEBI" id="CHEBI:57792"/>
        <dbReference type="ChEBI" id="CHEBI:62899"/>
        <dbReference type="ChEBI" id="CHEBI:77846"/>
        <dbReference type="ChEBI" id="CHEBI:90778"/>
        <dbReference type="ChEBI" id="CHEBI:232372"/>
        <dbReference type="EC" id="2.8.1.10"/>
    </reaction>
</comment>
<comment type="pathway">
    <text evidence="1">Cofactor biosynthesis; thiamine diphosphate biosynthesis.</text>
</comment>
<comment type="subunit">
    <text evidence="1">Homotetramer. Forms heterodimers with either ThiH or ThiS.</text>
</comment>
<comment type="subcellular location">
    <subcellularLocation>
        <location evidence="1">Cytoplasm</location>
    </subcellularLocation>
</comment>
<comment type="similarity">
    <text evidence="1">Belongs to the ThiG family.</text>
</comment>
<sequence>MDTLNIAGKHYNSRLLVGTGKYKDFEQTRAAIDASGAEIITVAIRRTNIGQNAGEPSLLDYLPPEEFTYLPNTAGCYSAEDAVRTLRLARELLDGHKLVKLEVLGDPNTLYPNMLETIKAAETLIKDGFDVMVYCSDDPIIAKQLEDMGCAAVMPLASLIGSGMGILNPWNLQIIIENAKIPVLVDAGVGTASDAAIAMELGCQGVLMNTAIAAAKDPVLMAGAMKKAVEAGREAFLAGRMPRKLYSASPSSPTSGLIG</sequence>
<feature type="chain" id="PRO_1000026010" description="Thiazole synthase">
    <location>
        <begin position="1"/>
        <end position="259"/>
    </location>
</feature>
<feature type="active site" description="Schiff-base intermediate with DXP" evidence="1">
    <location>
        <position position="100"/>
    </location>
</feature>
<feature type="binding site" evidence="1">
    <location>
        <position position="161"/>
    </location>
    <ligand>
        <name>1-deoxy-D-xylulose 5-phosphate</name>
        <dbReference type="ChEBI" id="CHEBI:57792"/>
    </ligand>
</feature>
<feature type="binding site" evidence="1">
    <location>
        <begin position="187"/>
        <end position="188"/>
    </location>
    <ligand>
        <name>1-deoxy-D-xylulose 5-phosphate</name>
        <dbReference type="ChEBI" id="CHEBI:57792"/>
    </ligand>
</feature>
<feature type="binding site" evidence="1">
    <location>
        <begin position="209"/>
        <end position="210"/>
    </location>
    <ligand>
        <name>1-deoxy-D-xylulose 5-phosphate</name>
        <dbReference type="ChEBI" id="CHEBI:57792"/>
    </ligand>
</feature>
<keyword id="KW-0963">Cytoplasm</keyword>
<keyword id="KW-1185">Reference proteome</keyword>
<keyword id="KW-0704">Schiff base</keyword>
<keyword id="KW-0784">Thiamine biosynthesis</keyword>
<keyword id="KW-0808">Transferase</keyword>
<reference key="1">
    <citation type="submission" date="2006-03" db="EMBL/GenBank/DDBJ databases">
        <title>Complete sequence of Methylobacillus flagellatus KT.</title>
        <authorList>
            <consortium name="US DOE Joint Genome Institute"/>
            <person name="Copeland A."/>
            <person name="Lucas S."/>
            <person name="Lapidus A."/>
            <person name="Barry K."/>
            <person name="Detter J.C."/>
            <person name="Glavina del Rio T."/>
            <person name="Hammon N."/>
            <person name="Israni S."/>
            <person name="Dalin E."/>
            <person name="Tice H."/>
            <person name="Pitluck S."/>
            <person name="Brettin T."/>
            <person name="Bruce D."/>
            <person name="Han C."/>
            <person name="Tapia R."/>
            <person name="Saunders E."/>
            <person name="Gilna P."/>
            <person name="Schmutz J."/>
            <person name="Larimer F."/>
            <person name="Land M."/>
            <person name="Kyrpides N."/>
            <person name="Anderson I."/>
            <person name="Richardson P."/>
        </authorList>
    </citation>
    <scope>NUCLEOTIDE SEQUENCE [LARGE SCALE GENOMIC DNA]</scope>
    <source>
        <strain>ATCC 51484 / DSM 6875 / VKM B-1610 / KT</strain>
    </source>
</reference>
<accession>Q1GXY7</accession>
<protein>
    <recommendedName>
        <fullName evidence="1">Thiazole synthase</fullName>
        <ecNumber evidence="1">2.8.1.10</ecNumber>
    </recommendedName>
</protein>
<proteinExistence type="inferred from homology"/>
<organism>
    <name type="scientific">Methylobacillus flagellatus (strain ATCC 51484 / DSM 6875 / VKM B-1610 / KT)</name>
    <dbReference type="NCBI Taxonomy" id="265072"/>
    <lineage>
        <taxon>Bacteria</taxon>
        <taxon>Pseudomonadati</taxon>
        <taxon>Pseudomonadota</taxon>
        <taxon>Betaproteobacteria</taxon>
        <taxon>Nitrosomonadales</taxon>
        <taxon>Methylophilaceae</taxon>
        <taxon>Methylobacillus</taxon>
    </lineage>
</organism>